<accession>Q1GZI2</accession>
<keyword id="KW-1185">Reference proteome</keyword>
<feature type="chain" id="PRO_0000291113" description="UPF0434 protein Mfla_2088">
    <location>
        <begin position="1"/>
        <end position="60"/>
    </location>
</feature>
<reference key="1">
    <citation type="submission" date="2006-03" db="EMBL/GenBank/DDBJ databases">
        <title>Complete sequence of Methylobacillus flagellatus KT.</title>
        <authorList>
            <consortium name="US DOE Joint Genome Institute"/>
            <person name="Copeland A."/>
            <person name="Lucas S."/>
            <person name="Lapidus A."/>
            <person name="Barry K."/>
            <person name="Detter J.C."/>
            <person name="Glavina del Rio T."/>
            <person name="Hammon N."/>
            <person name="Israni S."/>
            <person name="Dalin E."/>
            <person name="Tice H."/>
            <person name="Pitluck S."/>
            <person name="Brettin T."/>
            <person name="Bruce D."/>
            <person name="Han C."/>
            <person name="Tapia R."/>
            <person name="Saunders E."/>
            <person name="Gilna P."/>
            <person name="Schmutz J."/>
            <person name="Larimer F."/>
            <person name="Land M."/>
            <person name="Kyrpides N."/>
            <person name="Anderson I."/>
            <person name="Richardson P."/>
        </authorList>
    </citation>
    <scope>NUCLEOTIDE SEQUENCE [LARGE SCALE GENOMIC DNA]</scope>
    <source>
        <strain>ATCC 51484 / DSM 6875 / VKM B-1610 / KT</strain>
    </source>
</reference>
<evidence type="ECO:0000255" key="1">
    <source>
        <dbReference type="HAMAP-Rule" id="MF_01187"/>
    </source>
</evidence>
<organism>
    <name type="scientific">Methylobacillus flagellatus (strain ATCC 51484 / DSM 6875 / VKM B-1610 / KT)</name>
    <dbReference type="NCBI Taxonomy" id="265072"/>
    <lineage>
        <taxon>Bacteria</taxon>
        <taxon>Pseudomonadati</taxon>
        <taxon>Pseudomonadota</taxon>
        <taxon>Betaproteobacteria</taxon>
        <taxon>Nitrosomonadales</taxon>
        <taxon>Methylophilaceae</taxon>
        <taxon>Methylobacillus</taxon>
    </lineage>
</organism>
<protein>
    <recommendedName>
        <fullName evidence="1">UPF0434 protein Mfla_2088</fullName>
    </recommendedName>
</protein>
<proteinExistence type="inferred from homology"/>
<dbReference type="EMBL" id="CP000284">
    <property type="protein sequence ID" value="ABE50355.1"/>
    <property type="molecule type" value="Genomic_DNA"/>
</dbReference>
<dbReference type="RefSeq" id="WP_011480309.1">
    <property type="nucleotide sequence ID" value="NC_007947.1"/>
</dbReference>
<dbReference type="SMR" id="Q1GZI2"/>
<dbReference type="STRING" id="265072.Mfla_2088"/>
<dbReference type="KEGG" id="mfa:Mfla_2088"/>
<dbReference type="eggNOG" id="COG2835">
    <property type="taxonomic scope" value="Bacteria"/>
</dbReference>
<dbReference type="HOGENOM" id="CLU_155659_3_1_4"/>
<dbReference type="OrthoDB" id="9812205at2"/>
<dbReference type="Proteomes" id="UP000002440">
    <property type="component" value="Chromosome"/>
</dbReference>
<dbReference type="GO" id="GO:0005829">
    <property type="term" value="C:cytosol"/>
    <property type="evidence" value="ECO:0007669"/>
    <property type="project" value="TreeGrafter"/>
</dbReference>
<dbReference type="FunFam" id="2.20.25.10:FF:000002">
    <property type="entry name" value="UPF0434 protein YcaR"/>
    <property type="match status" value="1"/>
</dbReference>
<dbReference type="Gene3D" id="2.20.25.10">
    <property type="match status" value="1"/>
</dbReference>
<dbReference type="HAMAP" id="MF_01187">
    <property type="entry name" value="UPF0434"/>
    <property type="match status" value="1"/>
</dbReference>
<dbReference type="InterPro" id="IPR005651">
    <property type="entry name" value="Trm112-like"/>
</dbReference>
<dbReference type="PANTHER" id="PTHR33505:SF4">
    <property type="entry name" value="PROTEIN PREY, MITOCHONDRIAL"/>
    <property type="match status" value="1"/>
</dbReference>
<dbReference type="PANTHER" id="PTHR33505">
    <property type="entry name" value="ZGC:162634"/>
    <property type="match status" value="1"/>
</dbReference>
<dbReference type="Pfam" id="PF03966">
    <property type="entry name" value="Trm112p"/>
    <property type="match status" value="1"/>
</dbReference>
<dbReference type="SUPFAM" id="SSF158997">
    <property type="entry name" value="Trm112p-like"/>
    <property type="match status" value="1"/>
</dbReference>
<sequence length="60" mass="6865">MDAKLLEILVCPICKGPLHYKKNEQELICKPCRLAYPIQDGIPVMLEDEARKLPAEEEVE</sequence>
<gene>
    <name type="ordered locus">Mfla_2088</name>
</gene>
<name>Y2088_METFK</name>
<comment type="similarity">
    <text evidence="1">Belongs to the UPF0434 family.</text>
</comment>